<feature type="initiator methionine" description="Removed" evidence="2">
    <location>
        <position position="1"/>
    </location>
</feature>
<feature type="chain" id="PRO_0000073217" description="ATP synthase gamma chain, sodium ion specific">
    <location>
        <begin position="2"/>
        <end position="302"/>
    </location>
</feature>
<feature type="sequence conflict" description="In Ref. 1; AAA79907." evidence="3" ref="1">
    <original>R</original>
    <variation>P</variation>
    <location>
        <position position="10"/>
    </location>
</feature>
<feature type="sequence conflict" description="In Ref. 1; AAA79907." evidence="3" ref="1">
    <original>A</original>
    <variation>R</variation>
    <location>
        <position position="190"/>
    </location>
</feature>
<feature type="sequence conflict" description="In Ref. 1; AAA79907." evidence="3" ref="1">
    <original>F</original>
    <variation>L</variation>
    <location>
        <position position="237"/>
    </location>
</feature>
<feature type="sequence conflict" description="In Ref. 1; AAA79907." evidence="3" ref="1">
    <original>A</original>
    <variation>P</variation>
    <location>
        <position position="286"/>
    </location>
</feature>
<feature type="sequence conflict" description="In Ref. 1; AAA79907." evidence="3" ref="1">
    <original>ALN</original>
    <variation>D</variation>
    <location>
        <begin position="300"/>
        <end position="302"/>
    </location>
</feature>
<comment type="function">
    <text>Produces ATP from ADP in the presence of a proton gradient across the membrane. The gamma chain is believed to be important in regulating ATPase activity and the flow of protons through the CF(0) complex.</text>
</comment>
<comment type="activity regulation">
    <text>Inhibited by nitrate.</text>
</comment>
<comment type="subunit">
    <text>F-type ATPases have 2 components, CF(1) - the catalytic core - and CF(0) - the membrane proton channel. CF(1) has five subunits: alpha(3), beta(3), gamma(1), delta(1), epsilon(1). CF(0) has three main subunits: a, b and c.</text>
</comment>
<comment type="subcellular location">
    <subcellularLocation>
        <location evidence="1">Cell membrane</location>
        <topology evidence="1">Peripheral membrane protein</topology>
    </subcellularLocation>
</comment>
<comment type="similarity">
    <text evidence="3">Belongs to the ATPase gamma chain family.</text>
</comment>
<organism>
    <name type="scientific">Acetobacterium woodii (strain ATCC 29683 / DSM 1030 / JCM 2381 / KCTC 1655 / WB1)</name>
    <dbReference type="NCBI Taxonomy" id="931626"/>
    <lineage>
        <taxon>Bacteria</taxon>
        <taxon>Bacillati</taxon>
        <taxon>Bacillota</taxon>
        <taxon>Clostridia</taxon>
        <taxon>Eubacteriales</taxon>
        <taxon>Eubacteriaceae</taxon>
        <taxon>Acetobacterium</taxon>
    </lineage>
</organism>
<reference key="1">
    <citation type="journal article" date="1995" name="Biochim. Biophys. Acta">
        <title>The Na(+)-translocating ATPase of Acetobacterium woodii is a F1F0-type enzyme as deduced from the primary structure of its beta, gamma and epsilon subunits.</title>
        <authorList>
            <person name="Forster A."/>
            <person name="Daniel R."/>
            <person name="Mueller V."/>
        </authorList>
    </citation>
    <scope>NUCLEOTIDE SEQUENCE [GENOMIC DNA]</scope>
    <source>
        <strain>ATCC 29683 / DSM 1030 / JCM 2381 / KCTC 1655 / WB1</strain>
    </source>
</reference>
<reference key="2">
    <citation type="submission" date="2011-07" db="EMBL/GenBank/DDBJ databases">
        <title>Complete genome sequence of Acetobacterium woodii.</title>
        <authorList>
            <person name="Poehlein A."/>
            <person name="Schmidt S."/>
            <person name="Kaster A.-K."/>
            <person name="Goenrich M."/>
            <person name="Vollmers J."/>
            <person name="Thuermer A."/>
            <person name="Gottschalk G."/>
            <person name="Thauer R.K."/>
            <person name="Daniel R."/>
            <person name="Mueller V."/>
        </authorList>
    </citation>
    <scope>NUCLEOTIDE SEQUENCE [LARGE SCALE GENOMIC DNA]</scope>
    <source>
        <strain>ATCC 29683 / DSM 1030 / JCM 2381 / KCTC 1655 / WB1</strain>
    </source>
</reference>
<reference key="3">
    <citation type="journal article" date="1994" name="Eur. J. Biochem.">
        <title>Purification of ATP synthase from Acetobacterium woodii and identification as a Na(+)-translocating F1F0-type enzyme.</title>
        <authorList>
            <person name="Reidlinger J."/>
            <person name="Mueller V."/>
        </authorList>
    </citation>
    <scope>PROTEIN SEQUENCE OF 2-9</scope>
    <source>
        <strain>ATCC 29683 / DSM 1030 / JCM 2381 / KCTC 1655 / WB1</strain>
    </source>
</reference>
<evidence type="ECO:0000250" key="1"/>
<evidence type="ECO:0000269" key="2">
    <source>
    </source>
</evidence>
<evidence type="ECO:0000305" key="3"/>
<gene>
    <name type="primary">atpG</name>
    <name type="synonym">uncG</name>
    <name type="ordered locus">Awo_c02220</name>
</gene>
<keyword id="KW-0066">ATP synthesis</keyword>
<keyword id="KW-1003">Cell membrane</keyword>
<keyword id="KW-0139">CF(1)</keyword>
<keyword id="KW-0903">Direct protein sequencing</keyword>
<keyword id="KW-0375">Hydrogen ion transport</keyword>
<keyword id="KW-0406">Ion transport</keyword>
<keyword id="KW-0472">Membrane</keyword>
<keyword id="KW-1185">Reference proteome</keyword>
<keyword id="KW-0813">Transport</keyword>
<accession>P50005</accession>
<accession>H6LG95</accession>
<sequence>MAENVQDIKRRIKSVNSTMQITHAMELVASAKLRKSRELAEGRRPYFEAMIESIGRIVEKSGNARNIFMDQREVKKTAYIIITGDKGLAGGYNVNVAKLVEEHITDKENAVLFTVGSRGRDHFRNREYHIQGEYLGISERPNFFNAKEVTAIVMEGFKNGEYDEVYIAYTKFVSTITQHAQMMKLLPLSAEELITSGKVKTTEETKEEKSKMSDRELTIMTYEPEPEELLKYLIPNFVSSTVYGSMIESAASEQGARRTAMESATTNANEMIDGLTLQYNRVRQAAITQEISEIVGGAEALN</sequence>
<dbReference type="EMBL" id="U10505">
    <property type="protein sequence ID" value="AAA79907.1"/>
    <property type="molecule type" value="Genomic_DNA"/>
</dbReference>
<dbReference type="EMBL" id="CP002987">
    <property type="protein sequence ID" value="AFA47031.1"/>
    <property type="molecule type" value="Genomic_DNA"/>
</dbReference>
<dbReference type="PIR" id="I39747">
    <property type="entry name" value="I39747"/>
</dbReference>
<dbReference type="RefSeq" id="WP_014354634.1">
    <property type="nucleotide sequence ID" value="NC_016894.1"/>
</dbReference>
<dbReference type="SMR" id="P50005"/>
<dbReference type="STRING" id="931626.Awo_c02220"/>
<dbReference type="TCDB" id="3.A.2.1.5">
    <property type="family name" value="the h+- or na+-translocating f-type, v-type and a-type atpase (f-atpase) superfamily"/>
</dbReference>
<dbReference type="KEGG" id="awo:Awo_c02220"/>
<dbReference type="eggNOG" id="COG0224">
    <property type="taxonomic scope" value="Bacteria"/>
</dbReference>
<dbReference type="HOGENOM" id="CLU_050669_0_1_9"/>
<dbReference type="OrthoDB" id="9812769at2"/>
<dbReference type="Proteomes" id="UP000007177">
    <property type="component" value="Chromosome"/>
</dbReference>
<dbReference type="GO" id="GO:0005886">
    <property type="term" value="C:plasma membrane"/>
    <property type="evidence" value="ECO:0007669"/>
    <property type="project" value="UniProtKB-SubCell"/>
</dbReference>
<dbReference type="GO" id="GO:0045259">
    <property type="term" value="C:proton-transporting ATP synthase complex"/>
    <property type="evidence" value="ECO:0007669"/>
    <property type="project" value="UniProtKB-KW"/>
</dbReference>
<dbReference type="GO" id="GO:0005524">
    <property type="term" value="F:ATP binding"/>
    <property type="evidence" value="ECO:0007669"/>
    <property type="project" value="UniProtKB-UniRule"/>
</dbReference>
<dbReference type="GO" id="GO:0046933">
    <property type="term" value="F:proton-transporting ATP synthase activity, rotational mechanism"/>
    <property type="evidence" value="ECO:0007669"/>
    <property type="project" value="UniProtKB-UniRule"/>
</dbReference>
<dbReference type="GO" id="GO:0042777">
    <property type="term" value="P:proton motive force-driven plasma membrane ATP synthesis"/>
    <property type="evidence" value="ECO:0007669"/>
    <property type="project" value="UniProtKB-UniRule"/>
</dbReference>
<dbReference type="CDD" id="cd12151">
    <property type="entry name" value="F1-ATPase_gamma"/>
    <property type="match status" value="1"/>
</dbReference>
<dbReference type="Gene3D" id="3.40.1380.10">
    <property type="match status" value="1"/>
</dbReference>
<dbReference type="Gene3D" id="1.10.287.80">
    <property type="entry name" value="ATP synthase, gamma subunit, helix hairpin domain"/>
    <property type="match status" value="1"/>
</dbReference>
<dbReference type="HAMAP" id="MF_00815">
    <property type="entry name" value="ATP_synth_gamma_bact"/>
    <property type="match status" value="1"/>
</dbReference>
<dbReference type="InterPro" id="IPR035968">
    <property type="entry name" value="ATP_synth_F1_ATPase_gsu"/>
</dbReference>
<dbReference type="InterPro" id="IPR000131">
    <property type="entry name" value="ATP_synth_F1_gsu"/>
</dbReference>
<dbReference type="InterPro" id="IPR023632">
    <property type="entry name" value="ATP_synth_F1_gsu_CS"/>
</dbReference>
<dbReference type="NCBIfam" id="TIGR01146">
    <property type="entry name" value="ATPsyn_F1gamma"/>
    <property type="match status" value="1"/>
</dbReference>
<dbReference type="PANTHER" id="PTHR11693">
    <property type="entry name" value="ATP SYNTHASE GAMMA CHAIN"/>
    <property type="match status" value="1"/>
</dbReference>
<dbReference type="PANTHER" id="PTHR11693:SF22">
    <property type="entry name" value="ATP SYNTHASE SUBUNIT GAMMA, MITOCHONDRIAL"/>
    <property type="match status" value="1"/>
</dbReference>
<dbReference type="Pfam" id="PF00231">
    <property type="entry name" value="ATP-synt"/>
    <property type="match status" value="1"/>
</dbReference>
<dbReference type="PRINTS" id="PR00126">
    <property type="entry name" value="ATPASEGAMMA"/>
</dbReference>
<dbReference type="SUPFAM" id="SSF52943">
    <property type="entry name" value="ATP synthase (F1-ATPase), gamma subunit"/>
    <property type="match status" value="1"/>
</dbReference>
<dbReference type="PROSITE" id="PS00153">
    <property type="entry name" value="ATPASE_GAMMA"/>
    <property type="match status" value="1"/>
</dbReference>
<name>ATPG_ACEWD</name>
<protein>
    <recommendedName>
        <fullName>ATP synthase gamma chain, sodium ion specific</fullName>
    </recommendedName>
    <alternativeName>
        <fullName>F-ATPase gamma subunit, sodium ion specific</fullName>
    </alternativeName>
    <alternativeName>
        <fullName>Na(+)-translocating ATPase gamma chain</fullName>
    </alternativeName>
</protein>
<proteinExistence type="evidence at protein level"/>